<gene>
    <name evidence="1" type="primary">fadB</name>
    <name type="ordered locus">ECP_4059</name>
</gene>
<feature type="chain" id="PRO_0000255842" description="Fatty acid oxidation complex subunit alpha">
    <location>
        <begin position="1"/>
        <end position="729"/>
    </location>
</feature>
<feature type="region of interest" description="Enoyl-CoA hydratase/isomerase" evidence="1">
    <location>
        <begin position="1"/>
        <end position="189"/>
    </location>
</feature>
<feature type="region of interest" description="3-hydroxyacyl-CoA dehydrogenase" evidence="1">
    <location>
        <begin position="311"/>
        <end position="729"/>
    </location>
</feature>
<feature type="region of interest" description="Disordered" evidence="2">
    <location>
        <begin position="707"/>
        <end position="729"/>
    </location>
</feature>
<feature type="active site" description="For 3-hydroxyacyl-CoA dehydrogenase activity" evidence="1">
    <location>
        <position position="450"/>
    </location>
</feature>
<feature type="binding site" evidence="1">
    <location>
        <position position="296"/>
    </location>
    <ligand>
        <name>substrate</name>
    </ligand>
</feature>
<feature type="binding site" evidence="1">
    <location>
        <position position="324"/>
    </location>
    <ligand>
        <name>NAD(+)</name>
        <dbReference type="ChEBI" id="CHEBI:57540"/>
    </ligand>
</feature>
<feature type="binding site" evidence="1">
    <location>
        <position position="343"/>
    </location>
    <ligand>
        <name>NAD(+)</name>
        <dbReference type="ChEBI" id="CHEBI:57540"/>
    </ligand>
</feature>
<feature type="binding site" evidence="1">
    <location>
        <begin position="400"/>
        <end position="402"/>
    </location>
    <ligand>
        <name>NAD(+)</name>
        <dbReference type="ChEBI" id="CHEBI:57540"/>
    </ligand>
</feature>
<feature type="binding site" evidence="1">
    <location>
        <position position="407"/>
    </location>
    <ligand>
        <name>NAD(+)</name>
        <dbReference type="ChEBI" id="CHEBI:57540"/>
    </ligand>
</feature>
<feature type="binding site" evidence="1">
    <location>
        <position position="429"/>
    </location>
    <ligand>
        <name>NAD(+)</name>
        <dbReference type="ChEBI" id="CHEBI:57540"/>
    </ligand>
</feature>
<feature type="binding site" evidence="1">
    <location>
        <position position="453"/>
    </location>
    <ligand>
        <name>NAD(+)</name>
        <dbReference type="ChEBI" id="CHEBI:57540"/>
    </ligand>
</feature>
<feature type="binding site" evidence="1">
    <location>
        <position position="500"/>
    </location>
    <ligand>
        <name>substrate</name>
    </ligand>
</feature>
<feature type="binding site" evidence="1">
    <location>
        <position position="660"/>
    </location>
    <ligand>
        <name>substrate</name>
    </ligand>
</feature>
<feature type="site" description="Important for catalytic activity" evidence="1">
    <location>
        <position position="119"/>
    </location>
</feature>
<feature type="site" description="Important for catalytic activity" evidence="1">
    <location>
        <position position="139"/>
    </location>
</feature>
<keyword id="KW-0276">Fatty acid metabolism</keyword>
<keyword id="KW-0413">Isomerase</keyword>
<keyword id="KW-0442">Lipid degradation</keyword>
<keyword id="KW-0443">Lipid metabolism</keyword>
<keyword id="KW-0456">Lyase</keyword>
<keyword id="KW-0511">Multifunctional enzyme</keyword>
<keyword id="KW-0520">NAD</keyword>
<keyword id="KW-0560">Oxidoreductase</keyword>
<accession>Q0TAL0</accession>
<name>FADB_ECOL5</name>
<protein>
    <recommendedName>
        <fullName evidence="1">Fatty acid oxidation complex subunit alpha</fullName>
    </recommendedName>
    <domain>
        <recommendedName>
            <fullName evidence="1">Enoyl-CoA hydratase/Delta(3)-cis-Delta(2)-trans-enoyl-CoA isomerase/3-hydroxybutyryl-CoA epimerase</fullName>
            <ecNumber evidence="1">4.2.1.17</ecNumber>
            <ecNumber evidence="1">5.1.2.3</ecNumber>
            <ecNumber evidence="1">5.3.3.8</ecNumber>
        </recommendedName>
    </domain>
    <domain>
        <recommendedName>
            <fullName evidence="1">3-hydroxyacyl-CoA dehydrogenase</fullName>
            <ecNumber evidence="1">1.1.1.35</ecNumber>
        </recommendedName>
    </domain>
</protein>
<proteinExistence type="inferred from homology"/>
<evidence type="ECO:0000255" key="1">
    <source>
        <dbReference type="HAMAP-Rule" id="MF_01621"/>
    </source>
</evidence>
<evidence type="ECO:0000256" key="2">
    <source>
        <dbReference type="SAM" id="MobiDB-lite"/>
    </source>
</evidence>
<reference key="1">
    <citation type="journal article" date="2006" name="Mol. Microbiol.">
        <title>Role of pathogenicity island-associated integrases in the genome plasticity of uropathogenic Escherichia coli strain 536.</title>
        <authorList>
            <person name="Hochhut B."/>
            <person name="Wilde C."/>
            <person name="Balling G."/>
            <person name="Middendorf B."/>
            <person name="Dobrindt U."/>
            <person name="Brzuszkiewicz E."/>
            <person name="Gottschalk G."/>
            <person name="Carniel E."/>
            <person name="Hacker J."/>
        </authorList>
    </citation>
    <scope>NUCLEOTIDE SEQUENCE [LARGE SCALE GENOMIC DNA]</scope>
    <source>
        <strain>536 / UPEC</strain>
    </source>
</reference>
<dbReference type="EC" id="4.2.1.17" evidence="1"/>
<dbReference type="EC" id="5.1.2.3" evidence="1"/>
<dbReference type="EC" id="5.3.3.8" evidence="1"/>
<dbReference type="EC" id="1.1.1.35" evidence="1"/>
<dbReference type="EMBL" id="CP000247">
    <property type="protein sequence ID" value="ABG72019.1"/>
    <property type="molecule type" value="Genomic_DNA"/>
</dbReference>
<dbReference type="RefSeq" id="WP_000965960.1">
    <property type="nucleotide sequence ID" value="NC_008253.1"/>
</dbReference>
<dbReference type="SMR" id="Q0TAL0"/>
<dbReference type="KEGG" id="ecp:ECP_4059"/>
<dbReference type="HOGENOM" id="CLU_009834_16_3_6"/>
<dbReference type="UniPathway" id="UPA00659"/>
<dbReference type="Proteomes" id="UP000009182">
    <property type="component" value="Chromosome"/>
</dbReference>
<dbReference type="GO" id="GO:0036125">
    <property type="term" value="C:fatty acid beta-oxidation multienzyme complex"/>
    <property type="evidence" value="ECO:0007669"/>
    <property type="project" value="InterPro"/>
</dbReference>
<dbReference type="GO" id="GO:0008692">
    <property type="term" value="F:3-hydroxybutyryl-CoA epimerase activity"/>
    <property type="evidence" value="ECO:0007669"/>
    <property type="project" value="UniProtKB-UniRule"/>
</dbReference>
<dbReference type="GO" id="GO:0004165">
    <property type="term" value="F:delta(3)-delta(2)-enoyl-CoA isomerase activity"/>
    <property type="evidence" value="ECO:0007669"/>
    <property type="project" value="UniProtKB-UniRule"/>
</dbReference>
<dbReference type="GO" id="GO:0004300">
    <property type="term" value="F:enoyl-CoA hydratase activity"/>
    <property type="evidence" value="ECO:0007669"/>
    <property type="project" value="UniProtKB-UniRule"/>
</dbReference>
<dbReference type="GO" id="GO:0016509">
    <property type="term" value="F:long-chain-3-hydroxyacyl-CoA dehydrogenase activity"/>
    <property type="evidence" value="ECO:0007669"/>
    <property type="project" value="TreeGrafter"/>
</dbReference>
<dbReference type="GO" id="GO:0070403">
    <property type="term" value="F:NAD+ binding"/>
    <property type="evidence" value="ECO:0007669"/>
    <property type="project" value="InterPro"/>
</dbReference>
<dbReference type="GO" id="GO:0006635">
    <property type="term" value="P:fatty acid beta-oxidation"/>
    <property type="evidence" value="ECO:0007669"/>
    <property type="project" value="UniProtKB-UniRule"/>
</dbReference>
<dbReference type="CDD" id="cd06558">
    <property type="entry name" value="crotonase-like"/>
    <property type="match status" value="1"/>
</dbReference>
<dbReference type="FunFam" id="1.10.1040.50:FF:000001">
    <property type="entry name" value="Fatty acid oxidation complex subunit alpha"/>
    <property type="match status" value="1"/>
</dbReference>
<dbReference type="FunFam" id="3.90.226.10:FF:000018">
    <property type="entry name" value="Fatty acid oxidation complex subunit alpha"/>
    <property type="match status" value="1"/>
</dbReference>
<dbReference type="FunFam" id="3.40.50.720:FF:000009">
    <property type="entry name" value="Fatty oxidation complex, alpha subunit"/>
    <property type="match status" value="1"/>
</dbReference>
<dbReference type="Gene3D" id="1.10.1040.50">
    <property type="match status" value="1"/>
</dbReference>
<dbReference type="Gene3D" id="3.90.226.10">
    <property type="entry name" value="2-enoyl-CoA Hydratase, Chain A, domain 1"/>
    <property type="match status" value="1"/>
</dbReference>
<dbReference type="Gene3D" id="3.40.50.720">
    <property type="entry name" value="NAD(P)-binding Rossmann-like Domain"/>
    <property type="match status" value="1"/>
</dbReference>
<dbReference type="HAMAP" id="MF_01621">
    <property type="entry name" value="FadB"/>
    <property type="match status" value="1"/>
</dbReference>
<dbReference type="InterPro" id="IPR006180">
    <property type="entry name" value="3-OHacyl-CoA_DH_CS"/>
</dbReference>
<dbReference type="InterPro" id="IPR006176">
    <property type="entry name" value="3-OHacyl-CoA_DH_NAD-bd"/>
</dbReference>
<dbReference type="InterPro" id="IPR006108">
    <property type="entry name" value="3HC_DH_C"/>
</dbReference>
<dbReference type="InterPro" id="IPR008927">
    <property type="entry name" value="6-PGluconate_DH-like_C_sf"/>
</dbReference>
<dbReference type="InterPro" id="IPR029045">
    <property type="entry name" value="ClpP/crotonase-like_dom_sf"/>
</dbReference>
<dbReference type="InterPro" id="IPR018376">
    <property type="entry name" value="Enoyl-CoA_hyd/isom_CS"/>
</dbReference>
<dbReference type="InterPro" id="IPR001753">
    <property type="entry name" value="Enoyl-CoA_hydra/iso"/>
</dbReference>
<dbReference type="InterPro" id="IPR050136">
    <property type="entry name" value="FA_oxidation_alpha_subunit"/>
</dbReference>
<dbReference type="InterPro" id="IPR012799">
    <property type="entry name" value="FadB"/>
</dbReference>
<dbReference type="InterPro" id="IPR036291">
    <property type="entry name" value="NAD(P)-bd_dom_sf"/>
</dbReference>
<dbReference type="NCBIfam" id="TIGR02437">
    <property type="entry name" value="FadB"/>
    <property type="match status" value="1"/>
</dbReference>
<dbReference type="NCBIfam" id="NF008727">
    <property type="entry name" value="PRK11730.1"/>
    <property type="match status" value="1"/>
</dbReference>
<dbReference type="PANTHER" id="PTHR43612">
    <property type="entry name" value="TRIFUNCTIONAL ENZYME SUBUNIT ALPHA"/>
    <property type="match status" value="1"/>
</dbReference>
<dbReference type="PANTHER" id="PTHR43612:SF3">
    <property type="entry name" value="TRIFUNCTIONAL ENZYME SUBUNIT ALPHA, MITOCHONDRIAL"/>
    <property type="match status" value="1"/>
</dbReference>
<dbReference type="Pfam" id="PF00725">
    <property type="entry name" value="3HCDH"/>
    <property type="match status" value="2"/>
</dbReference>
<dbReference type="Pfam" id="PF02737">
    <property type="entry name" value="3HCDH_N"/>
    <property type="match status" value="1"/>
</dbReference>
<dbReference type="Pfam" id="PF00378">
    <property type="entry name" value="ECH_1"/>
    <property type="match status" value="1"/>
</dbReference>
<dbReference type="SUPFAM" id="SSF48179">
    <property type="entry name" value="6-phosphogluconate dehydrogenase C-terminal domain-like"/>
    <property type="match status" value="2"/>
</dbReference>
<dbReference type="SUPFAM" id="SSF52096">
    <property type="entry name" value="ClpP/crotonase"/>
    <property type="match status" value="1"/>
</dbReference>
<dbReference type="SUPFAM" id="SSF51735">
    <property type="entry name" value="NAD(P)-binding Rossmann-fold domains"/>
    <property type="match status" value="1"/>
</dbReference>
<dbReference type="PROSITE" id="PS00067">
    <property type="entry name" value="3HCDH"/>
    <property type="match status" value="1"/>
</dbReference>
<dbReference type="PROSITE" id="PS00166">
    <property type="entry name" value="ENOYL_COA_HYDRATASE"/>
    <property type="match status" value="1"/>
</dbReference>
<organism>
    <name type="scientific">Escherichia coli O6:K15:H31 (strain 536 / UPEC)</name>
    <dbReference type="NCBI Taxonomy" id="362663"/>
    <lineage>
        <taxon>Bacteria</taxon>
        <taxon>Pseudomonadati</taxon>
        <taxon>Pseudomonadota</taxon>
        <taxon>Gammaproteobacteria</taxon>
        <taxon>Enterobacterales</taxon>
        <taxon>Enterobacteriaceae</taxon>
        <taxon>Escherichia</taxon>
    </lineage>
</organism>
<sequence>MLYKGDTLYLDWLEDGIAELVFDAPGSVNKLDTATVASLGEAIGVLEQQSDLKGLLLRSNKAAFIVGADITEFLSLFLVPEEQLSQWLHFANSVFNRLEDLPVPTIAAVNGYALGGGCECVLATDYRLATPDLRIGLPETKLGIMPGFGGSVRMPRMLGADSALEIIAAGKDVGADQALKIGLVDGVVKAEKLVEGAMAILRQAINGDLDWKAKRQPKLEPLKLSKIEAAMSFTIAKGMVAQTAGKHYPAPITAVKTIEAAARFGREEALNLENKSFVPLAHTNEARALVGIFLNDQYVKGKAKKLTKDVETPKQAAVLGAGIMGGGIAYQSAWKGVPVVMKDINDKSLTLGMTEAAKLLNKQLERGKIDGLKLAGVISTIHPTLDYAGFDRVDVVVEAVVENPKVKKAVLAETEQKVRPDTVLASNTSTIPISELANALERPENFCGMHFFNPVHRMPLVEIIRGEKSSDETIAKVVAWASKMGKTPIVVNDCPGFFVNRVLFPYFAGFSQLLRDGADFRKIDKVMEKQFGWPMGPAYLLDVVGIDTAHHAQAVMAAGFPQRMQKDYRDAIDALFNANRFGQKNGLGFWRYKEDSKGKPKKEEDVVVDDLLAKVSQPKRDFSEEEIIARMMIPMVNEVVRCLEEGIIATPAEADMALVYGLGFPPFHGGAFRWLDTLGSAKYLDMAQQYQHLGPLYEVPEGMRNKARHNEPYYPPVEPARPVGDLKTA</sequence>
<comment type="function">
    <text evidence="1">Involved in the aerobic and anaerobic degradation of long-chain fatty acids via beta-oxidation cycle. Catalyzes the formation of 3-oxoacyl-CoA from enoyl-CoA via L-3-hydroxyacyl-CoA. It can also use D-3-hydroxyacyl-CoA and cis-3-enoyl-CoA as substrate.</text>
</comment>
<comment type="catalytic activity">
    <reaction evidence="1">
        <text>a (3S)-3-hydroxyacyl-CoA + NAD(+) = a 3-oxoacyl-CoA + NADH + H(+)</text>
        <dbReference type="Rhea" id="RHEA:22432"/>
        <dbReference type="ChEBI" id="CHEBI:15378"/>
        <dbReference type="ChEBI" id="CHEBI:57318"/>
        <dbReference type="ChEBI" id="CHEBI:57540"/>
        <dbReference type="ChEBI" id="CHEBI:57945"/>
        <dbReference type="ChEBI" id="CHEBI:90726"/>
        <dbReference type="EC" id="1.1.1.35"/>
    </reaction>
</comment>
<comment type="catalytic activity">
    <reaction evidence="1">
        <text>a (3S)-3-hydroxyacyl-CoA = a (2E)-enoyl-CoA + H2O</text>
        <dbReference type="Rhea" id="RHEA:16105"/>
        <dbReference type="ChEBI" id="CHEBI:15377"/>
        <dbReference type="ChEBI" id="CHEBI:57318"/>
        <dbReference type="ChEBI" id="CHEBI:58856"/>
        <dbReference type="EC" id="4.2.1.17"/>
    </reaction>
</comment>
<comment type="catalytic activity">
    <reaction evidence="1">
        <text>a 4-saturated-(3S)-3-hydroxyacyl-CoA = a (3E)-enoyl-CoA + H2O</text>
        <dbReference type="Rhea" id="RHEA:20724"/>
        <dbReference type="ChEBI" id="CHEBI:15377"/>
        <dbReference type="ChEBI" id="CHEBI:58521"/>
        <dbReference type="ChEBI" id="CHEBI:137480"/>
        <dbReference type="EC" id="4.2.1.17"/>
    </reaction>
</comment>
<comment type="catalytic activity">
    <reaction evidence="1">
        <text>(3S)-3-hydroxybutanoyl-CoA = (3R)-3-hydroxybutanoyl-CoA</text>
        <dbReference type="Rhea" id="RHEA:21760"/>
        <dbReference type="ChEBI" id="CHEBI:57315"/>
        <dbReference type="ChEBI" id="CHEBI:57316"/>
        <dbReference type="EC" id="5.1.2.3"/>
    </reaction>
</comment>
<comment type="catalytic activity">
    <reaction evidence="1">
        <text>a (3Z)-enoyl-CoA = a 4-saturated (2E)-enoyl-CoA</text>
        <dbReference type="Rhea" id="RHEA:45900"/>
        <dbReference type="ChEBI" id="CHEBI:85097"/>
        <dbReference type="ChEBI" id="CHEBI:85489"/>
        <dbReference type="EC" id="5.3.3.8"/>
    </reaction>
</comment>
<comment type="catalytic activity">
    <reaction evidence="1">
        <text>a (3E)-enoyl-CoA = a 4-saturated (2E)-enoyl-CoA</text>
        <dbReference type="Rhea" id="RHEA:45228"/>
        <dbReference type="ChEBI" id="CHEBI:58521"/>
        <dbReference type="ChEBI" id="CHEBI:85097"/>
        <dbReference type="EC" id="5.3.3.8"/>
    </reaction>
</comment>
<comment type="pathway">
    <text evidence="1">Lipid metabolism; fatty acid beta-oxidation.</text>
</comment>
<comment type="subunit">
    <text evidence="1">Heterotetramer of two alpha chains (FadB) and two beta chains (FadA).</text>
</comment>
<comment type="similarity">
    <text evidence="1">In the N-terminal section; belongs to the enoyl-CoA hydratase/isomerase family.</text>
</comment>
<comment type="similarity">
    <text evidence="1">In the C-terminal section; belongs to the 3-hydroxyacyl-CoA dehydrogenase family.</text>
</comment>